<sequence length="135" mass="15271">MPRNEKKTGQSASPRKLRVGELVRHAVAEILSQGGVHDPVLETHLITVPEVRMSPDLKLATVYVMPLGGKDEKPVLAALEQHKRFLRGEVARRVNLKYAPDLRFRIDERFAEAERIEKLLRTPAVQKDLSGEEET</sequence>
<keyword id="KW-0963">Cytoplasm</keyword>
<keyword id="KW-1185">Reference proteome</keyword>
<keyword id="KW-0690">Ribosome biogenesis</keyword>
<evidence type="ECO:0000255" key="1">
    <source>
        <dbReference type="HAMAP-Rule" id="MF_00003"/>
    </source>
</evidence>
<comment type="function">
    <text evidence="1">One of several proteins that assist in the late maturation steps of the functional core of the 30S ribosomal subunit. Associates with free 30S ribosomal subunits (but not with 30S subunits that are part of 70S ribosomes or polysomes). Required for efficient processing of 16S rRNA. May interact with the 5'-terminal helix region of 16S rRNA.</text>
</comment>
<comment type="subunit">
    <text evidence="1">Monomer. Binds 30S ribosomal subunits, but not 50S ribosomal subunits or 70S ribosomes.</text>
</comment>
<comment type="subcellular location">
    <subcellularLocation>
        <location evidence="1">Cytoplasm</location>
    </subcellularLocation>
</comment>
<comment type="similarity">
    <text evidence="1">Belongs to the RbfA family.</text>
</comment>
<gene>
    <name evidence="1" type="primary">rbfA</name>
    <name type="ordered locus">RPB_0601</name>
</gene>
<dbReference type="EMBL" id="CP000250">
    <property type="protein sequence ID" value="ABD05312.1"/>
    <property type="molecule type" value="Genomic_DNA"/>
</dbReference>
<dbReference type="RefSeq" id="WP_011439502.1">
    <property type="nucleotide sequence ID" value="NC_007778.1"/>
</dbReference>
<dbReference type="SMR" id="Q2J2J8"/>
<dbReference type="STRING" id="316058.RPB_0601"/>
<dbReference type="KEGG" id="rpb:RPB_0601"/>
<dbReference type="eggNOG" id="COG0858">
    <property type="taxonomic scope" value="Bacteria"/>
</dbReference>
<dbReference type="HOGENOM" id="CLU_089475_1_0_5"/>
<dbReference type="OrthoDB" id="9805051at2"/>
<dbReference type="Proteomes" id="UP000008809">
    <property type="component" value="Chromosome"/>
</dbReference>
<dbReference type="GO" id="GO:0005829">
    <property type="term" value="C:cytosol"/>
    <property type="evidence" value="ECO:0007669"/>
    <property type="project" value="TreeGrafter"/>
</dbReference>
<dbReference type="GO" id="GO:0043024">
    <property type="term" value="F:ribosomal small subunit binding"/>
    <property type="evidence" value="ECO:0007669"/>
    <property type="project" value="TreeGrafter"/>
</dbReference>
<dbReference type="GO" id="GO:0030490">
    <property type="term" value="P:maturation of SSU-rRNA"/>
    <property type="evidence" value="ECO:0007669"/>
    <property type="project" value="UniProtKB-UniRule"/>
</dbReference>
<dbReference type="Gene3D" id="3.30.300.20">
    <property type="match status" value="1"/>
</dbReference>
<dbReference type="HAMAP" id="MF_00003">
    <property type="entry name" value="RbfA"/>
    <property type="match status" value="1"/>
</dbReference>
<dbReference type="InterPro" id="IPR015946">
    <property type="entry name" value="KH_dom-like_a/b"/>
</dbReference>
<dbReference type="InterPro" id="IPR000238">
    <property type="entry name" value="RbfA"/>
</dbReference>
<dbReference type="InterPro" id="IPR023799">
    <property type="entry name" value="RbfA_dom_sf"/>
</dbReference>
<dbReference type="InterPro" id="IPR020053">
    <property type="entry name" value="Ribosome-bd_factorA_CS"/>
</dbReference>
<dbReference type="NCBIfam" id="NF001802">
    <property type="entry name" value="PRK00521.2-5"/>
    <property type="match status" value="1"/>
</dbReference>
<dbReference type="NCBIfam" id="TIGR00082">
    <property type="entry name" value="rbfA"/>
    <property type="match status" value="1"/>
</dbReference>
<dbReference type="PANTHER" id="PTHR33515">
    <property type="entry name" value="RIBOSOME-BINDING FACTOR A, CHLOROPLASTIC-RELATED"/>
    <property type="match status" value="1"/>
</dbReference>
<dbReference type="PANTHER" id="PTHR33515:SF1">
    <property type="entry name" value="RIBOSOME-BINDING FACTOR A, CHLOROPLASTIC-RELATED"/>
    <property type="match status" value="1"/>
</dbReference>
<dbReference type="Pfam" id="PF02033">
    <property type="entry name" value="RBFA"/>
    <property type="match status" value="1"/>
</dbReference>
<dbReference type="SUPFAM" id="SSF89919">
    <property type="entry name" value="Ribosome-binding factor A, RbfA"/>
    <property type="match status" value="1"/>
</dbReference>
<dbReference type="PROSITE" id="PS01319">
    <property type="entry name" value="RBFA"/>
    <property type="match status" value="1"/>
</dbReference>
<name>RBFA_RHOP2</name>
<organism>
    <name type="scientific">Rhodopseudomonas palustris (strain HaA2)</name>
    <dbReference type="NCBI Taxonomy" id="316058"/>
    <lineage>
        <taxon>Bacteria</taxon>
        <taxon>Pseudomonadati</taxon>
        <taxon>Pseudomonadota</taxon>
        <taxon>Alphaproteobacteria</taxon>
        <taxon>Hyphomicrobiales</taxon>
        <taxon>Nitrobacteraceae</taxon>
        <taxon>Rhodopseudomonas</taxon>
    </lineage>
</organism>
<reference key="1">
    <citation type="submission" date="2006-01" db="EMBL/GenBank/DDBJ databases">
        <title>Complete sequence of Rhodopseudomonas palustris HaA2.</title>
        <authorList>
            <consortium name="US DOE Joint Genome Institute"/>
            <person name="Copeland A."/>
            <person name="Lucas S."/>
            <person name="Lapidus A."/>
            <person name="Barry K."/>
            <person name="Detter J.C."/>
            <person name="Glavina T."/>
            <person name="Hammon N."/>
            <person name="Israni S."/>
            <person name="Pitluck S."/>
            <person name="Chain P."/>
            <person name="Malfatti S."/>
            <person name="Shin M."/>
            <person name="Vergez L."/>
            <person name="Schmutz J."/>
            <person name="Larimer F."/>
            <person name="Land M."/>
            <person name="Hauser L."/>
            <person name="Pelletier D.A."/>
            <person name="Kyrpides N."/>
            <person name="Anderson I."/>
            <person name="Oda Y."/>
            <person name="Harwood C.S."/>
            <person name="Richardson P."/>
        </authorList>
    </citation>
    <scope>NUCLEOTIDE SEQUENCE [LARGE SCALE GENOMIC DNA]</scope>
    <source>
        <strain>HaA2</strain>
    </source>
</reference>
<proteinExistence type="inferred from homology"/>
<accession>Q2J2J8</accession>
<protein>
    <recommendedName>
        <fullName evidence="1">Ribosome-binding factor A</fullName>
    </recommendedName>
</protein>
<feature type="chain" id="PRO_0000321247" description="Ribosome-binding factor A">
    <location>
        <begin position="1"/>
        <end position="135"/>
    </location>
</feature>